<proteinExistence type="inferred from homology"/>
<keyword id="KW-0328">Glycosyltransferase</keyword>
<keyword id="KW-0460">Magnesium</keyword>
<keyword id="KW-0665">Pyrimidine biosynthesis</keyword>
<keyword id="KW-1185">Reference proteome</keyword>
<keyword id="KW-0808">Transferase</keyword>
<comment type="function">
    <text evidence="1">Catalyzes the transfer of a ribosyl phosphate group from 5-phosphoribose 1-diphosphate to orotate, leading to the formation of orotidine monophosphate (OMP).</text>
</comment>
<comment type="catalytic activity">
    <reaction evidence="1">
        <text>orotidine 5'-phosphate + diphosphate = orotate + 5-phospho-alpha-D-ribose 1-diphosphate</text>
        <dbReference type="Rhea" id="RHEA:10380"/>
        <dbReference type="ChEBI" id="CHEBI:30839"/>
        <dbReference type="ChEBI" id="CHEBI:33019"/>
        <dbReference type="ChEBI" id="CHEBI:57538"/>
        <dbReference type="ChEBI" id="CHEBI:58017"/>
        <dbReference type="EC" id="2.4.2.10"/>
    </reaction>
</comment>
<comment type="cofactor">
    <cofactor evidence="1">
        <name>Mg(2+)</name>
        <dbReference type="ChEBI" id="CHEBI:18420"/>
    </cofactor>
</comment>
<comment type="pathway">
    <text evidence="1">Pyrimidine metabolism; UMP biosynthesis via de novo pathway; UMP from orotate: step 1/2.</text>
</comment>
<comment type="subunit">
    <text evidence="1">Homodimer.</text>
</comment>
<comment type="similarity">
    <text evidence="1">Belongs to the purine/pyrimidine phosphoribosyltransferase family. PyrE subfamily.</text>
</comment>
<comment type="sequence caution" evidence="2">
    <conflict type="erroneous initiation">
        <sequence resource="EMBL-CDS" id="CAD71516"/>
    </conflict>
</comment>
<organism>
    <name type="scientific">Rhodopirellula baltica (strain DSM 10527 / NCIMB 13988 / SH1)</name>
    <dbReference type="NCBI Taxonomy" id="243090"/>
    <lineage>
        <taxon>Bacteria</taxon>
        <taxon>Pseudomonadati</taxon>
        <taxon>Planctomycetota</taxon>
        <taxon>Planctomycetia</taxon>
        <taxon>Pirellulales</taxon>
        <taxon>Pirellulaceae</taxon>
        <taxon>Rhodopirellula</taxon>
    </lineage>
</organism>
<reference key="1">
    <citation type="journal article" date="2003" name="Proc. Natl. Acad. Sci. U.S.A.">
        <title>Complete genome sequence of the marine planctomycete Pirellula sp. strain 1.</title>
        <authorList>
            <person name="Gloeckner F.O."/>
            <person name="Kube M."/>
            <person name="Bauer M."/>
            <person name="Teeling H."/>
            <person name="Lombardot T."/>
            <person name="Ludwig W."/>
            <person name="Gade D."/>
            <person name="Beck A."/>
            <person name="Borzym K."/>
            <person name="Heitmann K."/>
            <person name="Rabus R."/>
            <person name="Schlesner H."/>
            <person name="Amann R."/>
            <person name="Reinhardt R."/>
        </authorList>
    </citation>
    <scope>NUCLEOTIDE SEQUENCE [LARGE SCALE GENOMIC DNA]</scope>
    <source>
        <strain>DSM 10527 / NCIMB 13988 / SH1</strain>
    </source>
</reference>
<protein>
    <recommendedName>
        <fullName evidence="1">Orotate phosphoribosyltransferase</fullName>
        <shortName evidence="1">OPRT</shortName>
        <shortName evidence="1">OPRTase</shortName>
        <ecNumber evidence="1">2.4.2.10</ecNumber>
    </recommendedName>
</protein>
<gene>
    <name evidence="1" type="primary">pyrE</name>
    <name type="ordered locus">RB328</name>
</gene>
<name>PYRE_RHOBA</name>
<dbReference type="EC" id="2.4.2.10" evidence="1"/>
<dbReference type="EMBL" id="BX294133">
    <property type="protein sequence ID" value="CAD71516.1"/>
    <property type="status" value="ALT_INIT"/>
    <property type="molecule type" value="Genomic_DNA"/>
</dbReference>
<dbReference type="RefSeq" id="NP_863843.1">
    <property type="nucleotide sequence ID" value="NC_005027.1"/>
</dbReference>
<dbReference type="SMR" id="Q7UYX5"/>
<dbReference type="FunCoup" id="Q7UYX5">
    <property type="interactions" value="443"/>
</dbReference>
<dbReference type="STRING" id="243090.RB328"/>
<dbReference type="EnsemblBacteria" id="CAD71516">
    <property type="protein sequence ID" value="CAD71516"/>
    <property type="gene ID" value="RB328"/>
</dbReference>
<dbReference type="KEGG" id="rba:RB328"/>
<dbReference type="PATRIC" id="fig|243090.15.peg.162"/>
<dbReference type="eggNOG" id="COG0461">
    <property type="taxonomic scope" value="Bacteria"/>
</dbReference>
<dbReference type="HOGENOM" id="CLU_074878_2_1_0"/>
<dbReference type="InParanoid" id="Q7UYX5"/>
<dbReference type="OrthoDB" id="4213751at2"/>
<dbReference type="UniPathway" id="UPA00070">
    <property type="reaction ID" value="UER00119"/>
</dbReference>
<dbReference type="Proteomes" id="UP000001025">
    <property type="component" value="Chromosome"/>
</dbReference>
<dbReference type="GO" id="GO:0000287">
    <property type="term" value="F:magnesium ion binding"/>
    <property type="evidence" value="ECO:0007669"/>
    <property type="project" value="UniProtKB-UniRule"/>
</dbReference>
<dbReference type="GO" id="GO:0004588">
    <property type="term" value="F:orotate phosphoribosyltransferase activity"/>
    <property type="evidence" value="ECO:0000318"/>
    <property type="project" value="GO_Central"/>
</dbReference>
<dbReference type="GO" id="GO:0044205">
    <property type="term" value="P:'de novo' UMP biosynthetic process"/>
    <property type="evidence" value="ECO:0007669"/>
    <property type="project" value="UniProtKB-UniRule"/>
</dbReference>
<dbReference type="GO" id="GO:0019856">
    <property type="term" value="P:pyrimidine nucleobase biosynthetic process"/>
    <property type="evidence" value="ECO:0000318"/>
    <property type="project" value="GO_Central"/>
</dbReference>
<dbReference type="GO" id="GO:0006222">
    <property type="term" value="P:UMP biosynthetic process"/>
    <property type="evidence" value="ECO:0000318"/>
    <property type="project" value="GO_Central"/>
</dbReference>
<dbReference type="CDD" id="cd06223">
    <property type="entry name" value="PRTases_typeI"/>
    <property type="match status" value="1"/>
</dbReference>
<dbReference type="FunFam" id="3.40.50.2020:FF:000029">
    <property type="entry name" value="Orotate phosphoribosyltransferase"/>
    <property type="match status" value="1"/>
</dbReference>
<dbReference type="Gene3D" id="3.40.50.2020">
    <property type="match status" value="1"/>
</dbReference>
<dbReference type="HAMAP" id="MF_01208">
    <property type="entry name" value="PyrE"/>
    <property type="match status" value="1"/>
</dbReference>
<dbReference type="InterPro" id="IPR023031">
    <property type="entry name" value="OPRT"/>
</dbReference>
<dbReference type="InterPro" id="IPR004467">
    <property type="entry name" value="Or_phspho_trans_dom"/>
</dbReference>
<dbReference type="InterPro" id="IPR000836">
    <property type="entry name" value="PRibTrfase_dom"/>
</dbReference>
<dbReference type="InterPro" id="IPR029057">
    <property type="entry name" value="PRTase-like"/>
</dbReference>
<dbReference type="NCBIfam" id="TIGR00336">
    <property type="entry name" value="pyrE"/>
    <property type="match status" value="1"/>
</dbReference>
<dbReference type="PANTHER" id="PTHR19278">
    <property type="entry name" value="OROTATE PHOSPHORIBOSYLTRANSFERASE"/>
    <property type="match status" value="1"/>
</dbReference>
<dbReference type="PANTHER" id="PTHR19278:SF9">
    <property type="entry name" value="URIDINE 5'-MONOPHOSPHATE SYNTHASE"/>
    <property type="match status" value="1"/>
</dbReference>
<dbReference type="Pfam" id="PF00156">
    <property type="entry name" value="Pribosyltran"/>
    <property type="match status" value="1"/>
</dbReference>
<dbReference type="SUPFAM" id="SSF53271">
    <property type="entry name" value="PRTase-like"/>
    <property type="match status" value="1"/>
</dbReference>
<dbReference type="PROSITE" id="PS00103">
    <property type="entry name" value="PUR_PYR_PR_TRANSFER"/>
    <property type="match status" value="1"/>
</dbReference>
<accession>Q7UYX5</accession>
<sequence>MSSDSANRDLAPLIALMETEALQRGEFTLASGKKANYYLDCRRVTLHPKGACLIGRAMLDVVLANAKESGVMPAAVGGMAIGADPITASIVTLAGGDDVDLKGFMVRKEPKGHGMGQQVEGPVTPGQKVVIVEDVITSGGSALKAVEAVQAFGLEVQYVLAIIDRLAGGAEAFAQKGLELKTLTTIRDFGLEP</sequence>
<feature type="chain" id="PRO_0000110732" description="Orotate phosphoribosyltransferase">
    <location>
        <begin position="1"/>
        <end position="193"/>
    </location>
</feature>
<feature type="binding site" evidence="1">
    <location>
        <position position="107"/>
    </location>
    <ligand>
        <name>5-phospho-alpha-D-ribose 1-diphosphate</name>
        <dbReference type="ChEBI" id="CHEBI:58017"/>
        <note>ligand shared between dimeric partners</note>
    </ligand>
</feature>
<feature type="binding site" description="in other chain" evidence="1">
    <location>
        <position position="108"/>
    </location>
    <ligand>
        <name>5-phospho-alpha-D-ribose 1-diphosphate</name>
        <dbReference type="ChEBI" id="CHEBI:58017"/>
        <note>ligand shared between dimeric partners</note>
    </ligand>
</feature>
<feature type="binding site" evidence="1">
    <location>
        <position position="111"/>
    </location>
    <ligand>
        <name>5-phospho-alpha-D-ribose 1-diphosphate</name>
        <dbReference type="ChEBI" id="CHEBI:58017"/>
        <note>ligand shared between dimeric partners</note>
    </ligand>
</feature>
<feature type="binding site" evidence="1">
    <location>
        <position position="113"/>
    </location>
    <ligand>
        <name>5-phospho-alpha-D-ribose 1-diphosphate</name>
        <dbReference type="ChEBI" id="CHEBI:58017"/>
        <note>ligand shared between dimeric partners</note>
    </ligand>
</feature>
<feature type="binding site" description="in other chain" evidence="1">
    <location>
        <begin position="133"/>
        <end position="141"/>
    </location>
    <ligand>
        <name>5-phospho-alpha-D-ribose 1-diphosphate</name>
        <dbReference type="ChEBI" id="CHEBI:58017"/>
        <note>ligand shared between dimeric partners</note>
    </ligand>
</feature>
<feature type="binding site" evidence="1">
    <location>
        <position position="137"/>
    </location>
    <ligand>
        <name>orotate</name>
        <dbReference type="ChEBI" id="CHEBI:30839"/>
    </ligand>
</feature>
<feature type="binding site" evidence="1">
    <location>
        <position position="165"/>
    </location>
    <ligand>
        <name>orotate</name>
        <dbReference type="ChEBI" id="CHEBI:30839"/>
    </ligand>
</feature>
<evidence type="ECO:0000255" key="1">
    <source>
        <dbReference type="HAMAP-Rule" id="MF_01208"/>
    </source>
</evidence>
<evidence type="ECO:0000305" key="2"/>